<sequence length="109" mass="11720">MAQFEWVHAAWLALAIVLEIVANVFLKFSDGFRRKIFGLLSLAAVLAAFSALSQAVKGIDLSVAYALWGGFGIAATLAAGWILFGQRLNRKGWIGLVLLLAGMIMVKLA</sequence>
<keyword id="KW-0997">Cell inner membrane</keyword>
<keyword id="KW-1003">Cell membrane</keyword>
<keyword id="KW-0472">Membrane</keyword>
<keyword id="KW-1185">Reference proteome</keyword>
<keyword id="KW-0812">Transmembrane</keyword>
<keyword id="KW-1133">Transmembrane helix</keyword>
<keyword id="KW-0813">Transport</keyword>
<comment type="function">
    <text evidence="1">Catalyzes the excretion of spermidine.</text>
</comment>
<comment type="subunit">
    <text evidence="1">Forms a complex with MdtJ.</text>
</comment>
<comment type="subcellular location">
    <subcellularLocation>
        <location evidence="1">Cell inner membrane</location>
        <topology evidence="1">Multi-pass membrane protein</topology>
    </subcellularLocation>
</comment>
<comment type="similarity">
    <text evidence="1">Belongs to the drug/metabolite transporter (DMT) superfamily. Small multidrug resistance (SMR) (TC 2.A.7.1) family. MdtI subfamily.</text>
</comment>
<name>MDTI_SHIB3</name>
<proteinExistence type="inferred from homology"/>
<protein>
    <recommendedName>
        <fullName evidence="1">Spermidine export protein MdtI</fullName>
    </recommendedName>
</protein>
<dbReference type="EMBL" id="CP001063">
    <property type="protein sequence ID" value="ACD09199.1"/>
    <property type="molecule type" value="Genomic_DNA"/>
</dbReference>
<dbReference type="RefSeq" id="WP_000046661.1">
    <property type="nucleotide sequence ID" value="NC_010658.1"/>
</dbReference>
<dbReference type="SMR" id="B2U1Q8"/>
<dbReference type="STRING" id="344609.SbBS512_E1785"/>
<dbReference type="GeneID" id="93775747"/>
<dbReference type="KEGG" id="sbc:SbBS512_E1785"/>
<dbReference type="HOGENOM" id="CLU_133067_0_4_6"/>
<dbReference type="Proteomes" id="UP000001030">
    <property type="component" value="Chromosome"/>
</dbReference>
<dbReference type="GO" id="GO:0005886">
    <property type="term" value="C:plasma membrane"/>
    <property type="evidence" value="ECO:0007669"/>
    <property type="project" value="UniProtKB-SubCell"/>
</dbReference>
<dbReference type="GO" id="GO:0015199">
    <property type="term" value="F:amino-acid betaine transmembrane transporter activity"/>
    <property type="evidence" value="ECO:0007669"/>
    <property type="project" value="TreeGrafter"/>
</dbReference>
<dbReference type="GO" id="GO:0015297">
    <property type="term" value="F:antiporter activity"/>
    <property type="evidence" value="ECO:0007669"/>
    <property type="project" value="TreeGrafter"/>
</dbReference>
<dbReference type="GO" id="GO:0015220">
    <property type="term" value="F:choline transmembrane transporter activity"/>
    <property type="evidence" value="ECO:0007669"/>
    <property type="project" value="TreeGrafter"/>
</dbReference>
<dbReference type="GO" id="GO:0015606">
    <property type="term" value="F:spermidine transmembrane transporter activity"/>
    <property type="evidence" value="ECO:0007669"/>
    <property type="project" value="UniProtKB-UniRule"/>
</dbReference>
<dbReference type="GO" id="GO:0031460">
    <property type="term" value="P:glycine betaine transport"/>
    <property type="evidence" value="ECO:0007669"/>
    <property type="project" value="TreeGrafter"/>
</dbReference>
<dbReference type="FunFam" id="1.10.3730.20:FF:000001">
    <property type="entry name" value="Quaternary ammonium compound resistance transporter SugE"/>
    <property type="match status" value="1"/>
</dbReference>
<dbReference type="Gene3D" id="1.10.3730.20">
    <property type="match status" value="1"/>
</dbReference>
<dbReference type="HAMAP" id="MF_01597">
    <property type="entry name" value="MdtI"/>
    <property type="match status" value="1"/>
</dbReference>
<dbReference type="InterPro" id="IPR000390">
    <property type="entry name" value="Small_drug/metabolite_transptr"/>
</dbReference>
<dbReference type="InterPro" id="IPR045324">
    <property type="entry name" value="Small_multidrug_res"/>
</dbReference>
<dbReference type="InterPro" id="IPR023737">
    <property type="entry name" value="Spermidine_export_MdtI"/>
</dbReference>
<dbReference type="NCBIfam" id="NF007934">
    <property type="entry name" value="PRK10650.1"/>
    <property type="match status" value="1"/>
</dbReference>
<dbReference type="PANTHER" id="PTHR30561">
    <property type="entry name" value="SMR FAMILY PROTON-DEPENDENT DRUG EFFLUX TRANSPORTER SUGE"/>
    <property type="match status" value="1"/>
</dbReference>
<dbReference type="PANTHER" id="PTHR30561:SF6">
    <property type="entry name" value="SPERMIDINE EXPORT PROTEIN MDTI"/>
    <property type="match status" value="1"/>
</dbReference>
<dbReference type="Pfam" id="PF00893">
    <property type="entry name" value="Multi_Drug_Res"/>
    <property type="match status" value="1"/>
</dbReference>
<dbReference type="SUPFAM" id="SSF103481">
    <property type="entry name" value="Multidrug resistance efflux transporter EmrE"/>
    <property type="match status" value="1"/>
</dbReference>
<organism>
    <name type="scientific">Shigella boydii serotype 18 (strain CDC 3083-94 / BS512)</name>
    <dbReference type="NCBI Taxonomy" id="344609"/>
    <lineage>
        <taxon>Bacteria</taxon>
        <taxon>Pseudomonadati</taxon>
        <taxon>Pseudomonadota</taxon>
        <taxon>Gammaproteobacteria</taxon>
        <taxon>Enterobacterales</taxon>
        <taxon>Enterobacteriaceae</taxon>
        <taxon>Shigella</taxon>
    </lineage>
</organism>
<reference key="1">
    <citation type="submission" date="2008-05" db="EMBL/GenBank/DDBJ databases">
        <title>Complete sequence of Shigella boydii serotype 18 strain BS512.</title>
        <authorList>
            <person name="Rasko D.A."/>
            <person name="Rosovitz M."/>
            <person name="Maurelli A.T."/>
            <person name="Myers G."/>
            <person name="Seshadri R."/>
            <person name="Cer R."/>
            <person name="Jiang L."/>
            <person name="Ravel J."/>
            <person name="Sebastian Y."/>
        </authorList>
    </citation>
    <scope>NUCLEOTIDE SEQUENCE [LARGE SCALE GENOMIC DNA]</scope>
    <source>
        <strain>CDC 3083-94 / BS512</strain>
    </source>
</reference>
<evidence type="ECO:0000255" key="1">
    <source>
        <dbReference type="HAMAP-Rule" id="MF_01597"/>
    </source>
</evidence>
<accession>B2U1Q8</accession>
<gene>
    <name evidence="1" type="primary">mdtI</name>
    <name type="ordered locus">SbBS512_E1785</name>
</gene>
<feature type="chain" id="PRO_1000197325" description="Spermidine export protein MdtI">
    <location>
        <begin position="1"/>
        <end position="109"/>
    </location>
</feature>
<feature type="transmembrane region" description="Helical" evidence="1">
    <location>
        <begin position="6"/>
        <end position="26"/>
    </location>
</feature>
<feature type="transmembrane region" description="Helical" evidence="1">
    <location>
        <begin position="36"/>
        <end position="56"/>
    </location>
</feature>
<feature type="transmembrane region" description="Helical" evidence="1">
    <location>
        <begin position="64"/>
        <end position="84"/>
    </location>
</feature>
<feature type="transmembrane region" description="Helical" evidence="1">
    <location>
        <begin position="88"/>
        <end position="108"/>
    </location>
</feature>